<protein>
    <recommendedName>
        <fullName evidence="1">Holocytochrome c-type synthase</fullName>
        <ecNumber evidence="1">4.4.1.17</ecNumber>
    </recommendedName>
    <alternativeName>
        <fullName evidence="1">Cytochrome c-type heme lyase</fullName>
        <shortName evidence="1">CCHL</shortName>
    </alternativeName>
</protein>
<name>CCHL_CHICK</name>
<sequence length="273" mass="31438">MGLSASSPAATAQSAAEPSKQHQVASPPSECPMHQEKMRGCPMHMKASDRRAENTDDVPAHQERAYEYVACPVKSGASQVNDDIDPSNMMPPPNQLPSPDQPFPLSTVREESSIPRAHSDKKWVYPSEQMFWNAMLRKGWRWKDDDITSEDMTNIIKIHNQNNEQAWKEILKWEALHAMECPCGPSLMRFGGKAKEYSPRARIRSWMGYELPFDRHDWIVDRCGKEVRYVIDYYDGGAVDKNYQFTILDVRPAFDSLSAVWDRMKVAWWRWTS</sequence>
<evidence type="ECO:0000250" key="1">
    <source>
        <dbReference type="UniProtKB" id="P53701"/>
    </source>
</evidence>
<evidence type="ECO:0000256" key="2">
    <source>
        <dbReference type="SAM" id="MobiDB-lite"/>
    </source>
</evidence>
<evidence type="ECO:0000305" key="3"/>
<accession>Q5F339</accession>
<reference key="1">
    <citation type="journal article" date="2005" name="Genome Biol.">
        <title>Full-length cDNAs from chicken bursal lymphocytes to facilitate gene function analysis.</title>
        <authorList>
            <person name="Caldwell R.B."/>
            <person name="Kierzek A.M."/>
            <person name="Arakawa H."/>
            <person name="Bezzubov Y."/>
            <person name="Zaim J."/>
            <person name="Fiedler P."/>
            <person name="Kutter S."/>
            <person name="Blagodatski A."/>
            <person name="Kostovska D."/>
            <person name="Koter M."/>
            <person name="Plachy J."/>
            <person name="Carninci P."/>
            <person name="Hayashizaki Y."/>
            <person name="Buerstedde J.-M."/>
        </authorList>
    </citation>
    <scope>NUCLEOTIDE SEQUENCE [LARGE SCALE MRNA]</scope>
    <source>
        <strain>CB</strain>
        <tissue>Bursa of Fabricius</tissue>
    </source>
</reference>
<gene>
    <name type="primary">HCCS</name>
    <name type="ORF">RCJMB04_37l21</name>
</gene>
<proteinExistence type="evidence at transcript level"/>
<dbReference type="EC" id="4.4.1.17" evidence="1"/>
<dbReference type="EMBL" id="AJ851811">
    <property type="protein sequence ID" value="CAH65445.1"/>
    <property type="molecule type" value="mRNA"/>
</dbReference>
<dbReference type="RefSeq" id="NP_001026446.1">
    <property type="nucleotide sequence ID" value="NM_001031275.2"/>
</dbReference>
<dbReference type="RefSeq" id="XP_046778592.1">
    <property type="nucleotide sequence ID" value="XM_046922636.1"/>
</dbReference>
<dbReference type="RefSeq" id="XP_046778593.1">
    <property type="nucleotide sequence ID" value="XM_046922637.1"/>
</dbReference>
<dbReference type="RefSeq" id="XP_046778594.1">
    <property type="nucleotide sequence ID" value="XM_046922638.1"/>
</dbReference>
<dbReference type="RefSeq" id="XP_046800386.1">
    <property type="nucleotide sequence ID" value="XM_046944430.1"/>
</dbReference>
<dbReference type="RefSeq" id="XP_046800387.1">
    <property type="nucleotide sequence ID" value="XM_046944431.1"/>
</dbReference>
<dbReference type="FunCoup" id="Q5F339">
    <property type="interactions" value="851"/>
</dbReference>
<dbReference type="STRING" id="9031.ENSGALP00000008922"/>
<dbReference type="PaxDb" id="9031-ENSGALP00000008922"/>
<dbReference type="Ensembl" id="ENSGALT00010050699.1">
    <property type="protein sequence ID" value="ENSGALP00010029939.1"/>
    <property type="gene ID" value="ENSGALG00010020975.1"/>
</dbReference>
<dbReference type="GeneID" id="424482"/>
<dbReference type="KEGG" id="gga:424482"/>
<dbReference type="CTD" id="3052"/>
<dbReference type="VEuPathDB" id="HostDB:geneid_424482"/>
<dbReference type="eggNOG" id="KOG3996">
    <property type="taxonomic scope" value="Eukaryota"/>
</dbReference>
<dbReference type="GeneTree" id="ENSGT00390000004175"/>
<dbReference type="InParanoid" id="Q5F339"/>
<dbReference type="OMA" id="KARFWLF"/>
<dbReference type="OrthoDB" id="4243at2759"/>
<dbReference type="PhylomeDB" id="Q5F339"/>
<dbReference type="PRO" id="PR:Q5F339"/>
<dbReference type="Proteomes" id="UP000000539">
    <property type="component" value="Chromosome 8"/>
</dbReference>
<dbReference type="GO" id="GO:0005743">
    <property type="term" value="C:mitochondrial inner membrane"/>
    <property type="evidence" value="ECO:0007669"/>
    <property type="project" value="UniProtKB-SubCell"/>
</dbReference>
<dbReference type="GO" id="GO:0005739">
    <property type="term" value="C:mitochondrion"/>
    <property type="evidence" value="ECO:0000318"/>
    <property type="project" value="GO_Central"/>
</dbReference>
<dbReference type="GO" id="GO:0004408">
    <property type="term" value="F:holocytochrome-c synthase activity"/>
    <property type="evidence" value="ECO:0000318"/>
    <property type="project" value="GO_Central"/>
</dbReference>
<dbReference type="GO" id="GO:0046872">
    <property type="term" value="F:metal ion binding"/>
    <property type="evidence" value="ECO:0007669"/>
    <property type="project" value="UniProtKB-KW"/>
</dbReference>
<dbReference type="InterPro" id="IPR000511">
    <property type="entry name" value="Holocyt_c/c1_synthase"/>
</dbReference>
<dbReference type="PANTHER" id="PTHR12743">
    <property type="entry name" value="CYTOCHROME C1 HEME LYASE"/>
    <property type="match status" value="1"/>
</dbReference>
<dbReference type="PANTHER" id="PTHR12743:SF0">
    <property type="entry name" value="HOLOCYTOCHROME C-TYPE SYNTHASE"/>
    <property type="match status" value="1"/>
</dbReference>
<dbReference type="Pfam" id="PF01265">
    <property type="entry name" value="Cyto_heme_lyase"/>
    <property type="match status" value="1"/>
</dbReference>
<dbReference type="PROSITE" id="PS00821">
    <property type="entry name" value="CYTO_HEME_LYASE_1"/>
    <property type="match status" value="1"/>
</dbReference>
<dbReference type="PROSITE" id="PS00822">
    <property type="entry name" value="CYTO_HEME_LYASE_2"/>
    <property type="match status" value="1"/>
</dbReference>
<organism>
    <name type="scientific">Gallus gallus</name>
    <name type="common">Chicken</name>
    <dbReference type="NCBI Taxonomy" id="9031"/>
    <lineage>
        <taxon>Eukaryota</taxon>
        <taxon>Metazoa</taxon>
        <taxon>Chordata</taxon>
        <taxon>Craniata</taxon>
        <taxon>Vertebrata</taxon>
        <taxon>Euteleostomi</taxon>
        <taxon>Archelosauria</taxon>
        <taxon>Archosauria</taxon>
        <taxon>Dinosauria</taxon>
        <taxon>Saurischia</taxon>
        <taxon>Theropoda</taxon>
        <taxon>Coelurosauria</taxon>
        <taxon>Aves</taxon>
        <taxon>Neognathae</taxon>
        <taxon>Galloanserae</taxon>
        <taxon>Galliformes</taxon>
        <taxon>Phasianidae</taxon>
        <taxon>Phasianinae</taxon>
        <taxon>Gallus</taxon>
    </lineage>
</organism>
<feature type="chain" id="PRO_0000331126" description="Holocytochrome c-type synthase">
    <location>
        <begin position="1"/>
        <end position="273"/>
    </location>
</feature>
<feature type="repeat" description="HRM 1">
    <location>
        <begin position="30"/>
        <end position="35"/>
    </location>
</feature>
<feature type="repeat" description="HRM 2">
    <location>
        <begin position="40"/>
        <end position="45"/>
    </location>
</feature>
<feature type="region of interest" description="Disordered" evidence="2">
    <location>
        <begin position="1"/>
        <end position="39"/>
    </location>
</feature>
<feature type="compositionally biased region" description="Low complexity" evidence="2">
    <location>
        <begin position="1"/>
        <end position="18"/>
    </location>
</feature>
<keyword id="KW-0349">Heme</keyword>
<keyword id="KW-0408">Iron</keyword>
<keyword id="KW-0456">Lyase</keyword>
<keyword id="KW-0472">Membrane</keyword>
<keyword id="KW-0479">Metal-binding</keyword>
<keyword id="KW-0496">Mitochondrion</keyword>
<keyword id="KW-0999">Mitochondrion inner membrane</keyword>
<keyword id="KW-1185">Reference proteome</keyword>
<keyword id="KW-0677">Repeat</keyword>
<comment type="function">
    <text evidence="1">Lyase that catalyzes the covalent linking of the heme group to the cytochrome C apoprotein to produce the mature functional cytochrome.</text>
</comment>
<comment type="catalytic activity">
    <reaction evidence="1">
        <text>holo-[cytochrome c] = apo-[cytochrome c] + heme b</text>
        <dbReference type="Rhea" id="RHEA:22648"/>
        <dbReference type="Rhea" id="RHEA-COMP:10725"/>
        <dbReference type="Rhea" id="RHEA-COMP:10726"/>
        <dbReference type="ChEBI" id="CHEBI:29950"/>
        <dbReference type="ChEBI" id="CHEBI:60344"/>
        <dbReference type="ChEBI" id="CHEBI:83739"/>
        <dbReference type="EC" id="4.4.1.17"/>
    </reaction>
    <physiologicalReaction direction="right-to-left" evidence="1">
        <dbReference type="Rhea" id="RHEA:22650"/>
    </physiologicalReaction>
</comment>
<comment type="subcellular location">
    <subcellularLocation>
        <location evidence="1">Mitochondrion inner membrane</location>
    </subcellularLocation>
</comment>
<comment type="similarity">
    <text evidence="3">Belongs to the cytochrome c-type heme lyase family.</text>
</comment>